<organismHost>
    <name type="scientific">Cavia cutleri</name>
    <name type="common">Guinea pig</name>
    <dbReference type="NCBI Taxonomy" id="10144"/>
</organismHost>
<organismHost>
    <name type="scientific">Cricetidae sp.</name>
    <name type="common">Hamster</name>
    <dbReference type="NCBI Taxonomy" id="36483"/>
</organismHost>
<organismHost>
    <name type="scientific">Mus musculus</name>
    <name type="common">Mouse</name>
    <dbReference type="NCBI Taxonomy" id="10090"/>
</organismHost>
<organismHost>
    <name type="scientific">Rattus norvegicus</name>
    <name type="common">Rat</name>
    <dbReference type="NCBI Taxonomy" id="10116"/>
</organismHost>
<evidence type="ECO:0000250" key="1"/>
<evidence type="ECO:0000250" key="2">
    <source>
        <dbReference type="UniProtKB" id="P04861"/>
    </source>
</evidence>
<evidence type="ECO:0000250" key="3">
    <source>
        <dbReference type="UniProtKB" id="P04862"/>
    </source>
</evidence>
<evidence type="ECO:0000305" key="4"/>
<proteinExistence type="inferred from homology"/>
<comment type="function">
    <text evidence="3">The different products prevent the establishment of cellular antiviral state by blocking the interferon-alpha/beta (IFN-alpha/beta) and IFN-gamma signaling pathways. They inhibit IFN-alpha/beta induced tyrosine phosphorylation of STAT1 and STAT2. Blocking the IFN-alpha/beta pathway requires binding to STAT1 in the cytoplasm. They inhibit IFN-gamma induced serine phosphorylation of STAT1. Block the IFN-gamma pathway by binding to and stabilizing the parallel form of the STAT1 dimer, further inducing high-molecular-weight complex formation and inhibition of transcription by IFN-gamma. May also have a role in preventing the cell to enter apoptosis. Modulate regulation of viral transcription and replication. Overexpression inhibits the viral RNA polymerase. The absence of all C', C and Y2 proteins leads to viral delayed growth. Plays an important role in virion particles release. Modulates virion shape.</text>
</comment>
<comment type="subunit">
    <text evidence="3">The different isoforms interact (via C-terminus) with unphosphorylated and phosphorylated human STAT1 (via N-terminus), favoring the formation of parallel STAT1 homodimers. The different isoforms do not interact with host STAT2. C protein interacts with L protein; this interaction has an inhibitory effect on viral transcription and replication.</text>
</comment>
<comment type="subcellular location">
    <subcellularLocation>
        <location evidence="3">Host cytoplasm</location>
    </subcellularLocation>
    <text evidence="3">Protein C' seems to localize around the Golgi.</text>
</comment>
<comment type="alternative products">
    <event type="alternative initiation"/>
    <isoform>
        <id>P14253-1</id>
        <name>C'</name>
        <sequence type="displayed"/>
    </isoform>
    <isoform>
        <id>P14253-2</id>
        <name>C</name>
        <sequence type="described" ref="VSP_018929"/>
    </isoform>
    <isoform>
        <id>P14253-3</id>
        <name>Y2</name>
        <sequence type="described" ref="VSP_018930"/>
    </isoform>
</comment>
<comment type="domain">
    <text evidence="2">The disordered region at the N-terminus is involved in C protein self-degradation in trans. This self-degradation of C protein may play a role in the regulation of viral RNA synthesis. The disordered region at the N-terminus is also involved in the host STAT1 degradation in order to counteract the host innate antiviral response.</text>
</comment>
<comment type="PTM">
    <text evidence="2">Protein Y2 is produced not only by alternative initiation, but also by proteolytic cleavage of C'. Only alternative initiation is detected in vitro, whereas in vivo cleavage seems to be predominant.</text>
</comment>
<comment type="miscellaneous">
    <text evidence="3">The C protein is found in virion at a ratio of approximately 40 molecules per virion, presumably associated with the nucleocapsid.</text>
</comment>
<comment type="miscellaneous">
    <text evidence="4">The P/V/C gene has two overlapping open reading frames. One encodes the P/V/W proteins and the other the C/Y proteins.</text>
</comment>
<comment type="miscellaneous">
    <molecule>Isoform C'</molecule>
    <text>The initiator methionine is coded by an unusual start codon ACG.</text>
</comment>
<comment type="miscellaneous">
    <molecule>Isoform C</molecule>
    <text evidence="4">Most abundant isoform in infected cells.</text>
</comment>
<comment type="similarity">
    <text evidence="4">Belongs to the respirovirus protein C family.</text>
</comment>
<comment type="caution">
    <text evidence="4">The C' protein uses an unusual ACG start codon.</text>
</comment>
<reference key="1">
    <citation type="journal article" date="1989" name="Nucleic Acids Res.">
        <title>Cloning and sequencing of the polymerase gene (P) of Sendai virus (strain 6/94).</title>
        <authorList>
            <person name="Homann H.E."/>
            <person name="Neubert W.J."/>
        </authorList>
    </citation>
    <scope>NUCLEOTIDE SEQUENCE [GENOMIC RNA]</scope>
</reference>
<accession>P14253</accession>
<accession>P14256</accession>
<accession>Q88436</accession>
<protein>
    <recommendedName>
        <fullName>Protein C'</fullName>
    </recommendedName>
</protein>
<sequence length="215" mass="25159">MASATLTAWIKMPSFLKKILKLRGRRQEDESRSRTLSDSSMLSCRVNQLTSEGTEAGSTTPSTLPKDQALLIEPKVRAKEKSQHRRPKIIDQVRRVESLGEQASQRQKHMLETLINKIYTGPLGEELVQTLYLRIWAMEETPESLKILQMREDIRDQVLKMKTERWLRTLIRGEKTKLKDFQKRYEEVHPYLMKEKVEQVIMEEAWSLAAHIVQE</sequence>
<feature type="initiator methionine" description="Removed; by host" evidence="1">
    <location>
        <position position="1"/>
    </location>
</feature>
<feature type="chain" id="PRO_0000039390" description="Protein C'" evidence="4">
    <location>
        <begin position="2"/>
        <end position="215"/>
    </location>
</feature>
<feature type="region of interest" description="Disordered" evidence="2">
    <location>
        <begin position="12"/>
        <end position="34"/>
    </location>
</feature>
<feature type="region of interest" description="Involved in self-degradation and in host STAT1 degradation" evidence="2">
    <location>
        <begin position="15"/>
        <end position="22"/>
    </location>
</feature>
<feature type="splice variant" id="VSP_018930" description="In isoform Y2." evidence="4">
    <location>
        <begin position="1"/>
        <end position="40"/>
    </location>
</feature>
<feature type="splice variant" id="VSP_018929" description="In isoform C." evidence="4">
    <location>
        <begin position="1"/>
        <end position="11"/>
    </location>
</feature>
<dbReference type="EMBL" id="X17007">
    <property type="protein sequence ID" value="CAA34868.1"/>
    <property type="molecule type" value="Genomic_RNA"/>
</dbReference>
<dbReference type="EMBL" id="X17007">
    <property type="protein sequence ID" value="CAA34869.1"/>
    <property type="molecule type" value="Genomic_RNA"/>
</dbReference>
<dbReference type="SMR" id="P14253"/>
<dbReference type="GO" id="GO:0030430">
    <property type="term" value="C:host cell cytoplasm"/>
    <property type="evidence" value="ECO:0007669"/>
    <property type="project" value="UniProtKB-SubCell"/>
</dbReference>
<dbReference type="GO" id="GO:0052170">
    <property type="term" value="P:symbiont-mediated suppression of host innate immune response"/>
    <property type="evidence" value="ECO:0007669"/>
    <property type="project" value="UniProtKB-KW"/>
</dbReference>
<dbReference type="GO" id="GO:0039563">
    <property type="term" value="P:symbiont-mediated suppression of host JAK-STAT cascade via inhibition of STAT1 activity"/>
    <property type="evidence" value="ECO:0000250"/>
    <property type="project" value="UniProtKB"/>
</dbReference>
<dbReference type="GO" id="GO:0039564">
    <property type="term" value="P:symbiont-mediated suppression of host JAK-STAT cascade via inhibition of STAT2 activity"/>
    <property type="evidence" value="ECO:0007669"/>
    <property type="project" value="UniProtKB-KW"/>
</dbReference>
<dbReference type="GO" id="GO:0039502">
    <property type="term" value="P:symbiont-mediated suppression of host type I interferon-mediated signaling pathway"/>
    <property type="evidence" value="ECO:0007669"/>
    <property type="project" value="UniProtKB-KW"/>
</dbReference>
<dbReference type="InterPro" id="IPR002608">
    <property type="entry name" value="Paramyxo_C"/>
</dbReference>
<dbReference type="Pfam" id="PF01692">
    <property type="entry name" value="Paramyxo_C"/>
    <property type="match status" value="1"/>
</dbReference>
<keyword id="KW-0024">Alternative initiation</keyword>
<keyword id="KW-1035">Host cytoplasm</keyword>
<keyword id="KW-0945">Host-virus interaction</keyword>
<keyword id="KW-1090">Inhibition of host innate immune response by virus</keyword>
<keyword id="KW-1114">Inhibition of host interferon signaling pathway by virus</keyword>
<keyword id="KW-1105">Inhibition of host STAT1 by virus</keyword>
<keyword id="KW-1106">Inhibition of host STAT2 by virus</keyword>
<keyword id="KW-0922">Interferon antiviral system evasion</keyword>
<keyword id="KW-0899">Viral immunoevasion</keyword>
<organism>
    <name type="scientific">Sendai virus (strain 6/94)</name>
    <name type="common">SeV</name>
    <dbReference type="NCBI Taxonomy" id="11193"/>
    <lineage>
        <taxon>Viruses</taxon>
        <taxon>Riboviria</taxon>
        <taxon>Orthornavirae</taxon>
        <taxon>Negarnaviricota</taxon>
        <taxon>Haploviricotina</taxon>
        <taxon>Monjiviricetes</taxon>
        <taxon>Mononegavirales</taxon>
        <taxon>Paramyxoviridae</taxon>
        <taxon>Feraresvirinae</taxon>
        <taxon>Respirovirus</taxon>
        <taxon>Respirovirus muris</taxon>
    </lineage>
</organism>
<name>C_SEND6</name>
<gene>
    <name type="primary">P/V/C</name>
</gene>